<sequence length="178" mass="19787">MSRVGKKIIDIPSDVTVTFDGNHVTVKGPKGELSRTLNERMTFKQEENTIEVVRPSDSKEDRTNHGTTRALLNNMVQGVSQGYVKVLELVGVGYRAQMQGKDLILNVGYSHPVEIKAEENITFSVEKNTVVKVEGISKEQVGALASNIRSVRPPEPYKGKGIRYQGEYVRRKEGKTGK</sequence>
<gene>
    <name evidence="1" type="primary">rplF</name>
    <name type="ordered locus">SaurJH1_2303</name>
</gene>
<organism>
    <name type="scientific">Staphylococcus aureus (strain JH1)</name>
    <dbReference type="NCBI Taxonomy" id="359787"/>
    <lineage>
        <taxon>Bacteria</taxon>
        <taxon>Bacillati</taxon>
        <taxon>Bacillota</taxon>
        <taxon>Bacilli</taxon>
        <taxon>Bacillales</taxon>
        <taxon>Staphylococcaceae</taxon>
        <taxon>Staphylococcus</taxon>
    </lineage>
</organism>
<keyword id="KW-0687">Ribonucleoprotein</keyword>
<keyword id="KW-0689">Ribosomal protein</keyword>
<keyword id="KW-0694">RNA-binding</keyword>
<keyword id="KW-0699">rRNA-binding</keyword>
<evidence type="ECO:0000255" key="1">
    <source>
        <dbReference type="HAMAP-Rule" id="MF_01365"/>
    </source>
</evidence>
<evidence type="ECO:0000305" key="2"/>
<accession>A6U3W0</accession>
<proteinExistence type="inferred from homology"/>
<reference key="1">
    <citation type="submission" date="2007-06" db="EMBL/GenBank/DDBJ databases">
        <title>Complete sequence of chromosome of Staphylococcus aureus subsp. aureus JH1.</title>
        <authorList>
            <consortium name="US DOE Joint Genome Institute"/>
            <person name="Copeland A."/>
            <person name="Lucas S."/>
            <person name="Lapidus A."/>
            <person name="Barry K."/>
            <person name="Detter J.C."/>
            <person name="Glavina del Rio T."/>
            <person name="Hammon N."/>
            <person name="Israni S."/>
            <person name="Dalin E."/>
            <person name="Tice H."/>
            <person name="Pitluck S."/>
            <person name="Chain P."/>
            <person name="Malfatti S."/>
            <person name="Shin M."/>
            <person name="Vergez L."/>
            <person name="Schmutz J."/>
            <person name="Larimer F."/>
            <person name="Land M."/>
            <person name="Hauser L."/>
            <person name="Kyrpides N."/>
            <person name="Ivanova N."/>
            <person name="Tomasz A."/>
            <person name="Richardson P."/>
        </authorList>
    </citation>
    <scope>NUCLEOTIDE SEQUENCE [LARGE SCALE GENOMIC DNA]</scope>
    <source>
        <strain>JH1</strain>
    </source>
</reference>
<name>RL6_STAA2</name>
<dbReference type="EMBL" id="CP000736">
    <property type="protein sequence ID" value="ABR53128.1"/>
    <property type="molecule type" value="Genomic_DNA"/>
</dbReference>
<dbReference type="SMR" id="A6U3W0"/>
<dbReference type="KEGG" id="sah:SaurJH1_2303"/>
<dbReference type="HOGENOM" id="CLU_065464_1_2_9"/>
<dbReference type="GO" id="GO:0022625">
    <property type="term" value="C:cytosolic large ribosomal subunit"/>
    <property type="evidence" value="ECO:0007669"/>
    <property type="project" value="TreeGrafter"/>
</dbReference>
<dbReference type="GO" id="GO:0019843">
    <property type="term" value="F:rRNA binding"/>
    <property type="evidence" value="ECO:0007669"/>
    <property type="project" value="UniProtKB-UniRule"/>
</dbReference>
<dbReference type="GO" id="GO:0003735">
    <property type="term" value="F:structural constituent of ribosome"/>
    <property type="evidence" value="ECO:0007669"/>
    <property type="project" value="InterPro"/>
</dbReference>
<dbReference type="GO" id="GO:0002181">
    <property type="term" value="P:cytoplasmic translation"/>
    <property type="evidence" value="ECO:0007669"/>
    <property type="project" value="TreeGrafter"/>
</dbReference>
<dbReference type="FunFam" id="3.90.930.12:FF:000001">
    <property type="entry name" value="50S ribosomal protein L6"/>
    <property type="match status" value="1"/>
</dbReference>
<dbReference type="FunFam" id="3.90.930.12:FF:000002">
    <property type="entry name" value="50S ribosomal protein L6"/>
    <property type="match status" value="1"/>
</dbReference>
<dbReference type="Gene3D" id="3.90.930.12">
    <property type="entry name" value="Ribosomal protein L6, alpha-beta domain"/>
    <property type="match status" value="2"/>
</dbReference>
<dbReference type="HAMAP" id="MF_01365_B">
    <property type="entry name" value="Ribosomal_uL6_B"/>
    <property type="match status" value="1"/>
</dbReference>
<dbReference type="InterPro" id="IPR000702">
    <property type="entry name" value="Ribosomal_uL6-like"/>
</dbReference>
<dbReference type="InterPro" id="IPR036789">
    <property type="entry name" value="Ribosomal_uL6-like_a/b-dom_sf"/>
</dbReference>
<dbReference type="InterPro" id="IPR020040">
    <property type="entry name" value="Ribosomal_uL6_a/b-dom"/>
</dbReference>
<dbReference type="InterPro" id="IPR019906">
    <property type="entry name" value="Ribosomal_uL6_bac-type"/>
</dbReference>
<dbReference type="InterPro" id="IPR002358">
    <property type="entry name" value="Ribosomal_uL6_CS"/>
</dbReference>
<dbReference type="NCBIfam" id="TIGR03654">
    <property type="entry name" value="L6_bact"/>
    <property type="match status" value="1"/>
</dbReference>
<dbReference type="PANTHER" id="PTHR11655">
    <property type="entry name" value="60S/50S RIBOSOMAL PROTEIN L6/L9"/>
    <property type="match status" value="1"/>
</dbReference>
<dbReference type="PANTHER" id="PTHR11655:SF14">
    <property type="entry name" value="LARGE RIBOSOMAL SUBUNIT PROTEIN UL6M"/>
    <property type="match status" value="1"/>
</dbReference>
<dbReference type="Pfam" id="PF00347">
    <property type="entry name" value="Ribosomal_L6"/>
    <property type="match status" value="2"/>
</dbReference>
<dbReference type="PIRSF" id="PIRSF002162">
    <property type="entry name" value="Ribosomal_L6"/>
    <property type="match status" value="1"/>
</dbReference>
<dbReference type="PRINTS" id="PR00059">
    <property type="entry name" value="RIBOSOMALL6"/>
</dbReference>
<dbReference type="SUPFAM" id="SSF56053">
    <property type="entry name" value="Ribosomal protein L6"/>
    <property type="match status" value="2"/>
</dbReference>
<dbReference type="PROSITE" id="PS00525">
    <property type="entry name" value="RIBOSOMAL_L6_1"/>
    <property type="match status" value="1"/>
</dbReference>
<protein>
    <recommendedName>
        <fullName evidence="1">Large ribosomal subunit protein uL6</fullName>
    </recommendedName>
    <alternativeName>
        <fullName evidence="2">50S ribosomal protein L6</fullName>
    </alternativeName>
</protein>
<comment type="function">
    <text evidence="1">This protein binds to the 23S rRNA, and is important in its secondary structure. It is located near the subunit interface in the base of the L7/L12 stalk, and near the tRNA binding site of the peptidyltransferase center.</text>
</comment>
<comment type="subunit">
    <text evidence="1">Part of the 50S ribosomal subunit.</text>
</comment>
<comment type="similarity">
    <text evidence="1">Belongs to the universal ribosomal protein uL6 family.</text>
</comment>
<feature type="chain" id="PRO_1000087068" description="Large ribosomal subunit protein uL6">
    <location>
        <begin position="1"/>
        <end position="178"/>
    </location>
</feature>